<feature type="chain" id="PRO_0000329212" description="Phosphate acyltransferase">
    <location>
        <begin position="1"/>
        <end position="330"/>
    </location>
</feature>
<keyword id="KW-0963">Cytoplasm</keyword>
<keyword id="KW-0444">Lipid biosynthesis</keyword>
<keyword id="KW-0443">Lipid metabolism</keyword>
<keyword id="KW-0594">Phospholipid biosynthesis</keyword>
<keyword id="KW-1208">Phospholipid metabolism</keyword>
<keyword id="KW-1185">Reference proteome</keyword>
<keyword id="KW-0808">Transferase</keyword>
<comment type="function">
    <text evidence="1">Catalyzes the reversible formation of acyl-phosphate (acyl-PO(4)) from acyl-[acyl-carrier-protein] (acyl-ACP). This enzyme utilizes acyl-ACP as fatty acyl donor, but not acyl-CoA.</text>
</comment>
<comment type="catalytic activity">
    <reaction evidence="1">
        <text>a fatty acyl-[ACP] + phosphate = an acyl phosphate + holo-[ACP]</text>
        <dbReference type="Rhea" id="RHEA:42292"/>
        <dbReference type="Rhea" id="RHEA-COMP:9685"/>
        <dbReference type="Rhea" id="RHEA-COMP:14125"/>
        <dbReference type="ChEBI" id="CHEBI:43474"/>
        <dbReference type="ChEBI" id="CHEBI:59918"/>
        <dbReference type="ChEBI" id="CHEBI:64479"/>
        <dbReference type="ChEBI" id="CHEBI:138651"/>
        <dbReference type="EC" id="2.3.1.274"/>
    </reaction>
</comment>
<comment type="pathway">
    <text evidence="1">Lipid metabolism; phospholipid metabolism.</text>
</comment>
<comment type="subunit">
    <text evidence="1">Homodimer. Probably interacts with PlsY.</text>
</comment>
<comment type="subcellular location">
    <subcellularLocation>
        <location evidence="1">Cytoplasm</location>
    </subcellularLocation>
    <text evidence="1">Associated with the membrane possibly through PlsY.</text>
</comment>
<comment type="similarity">
    <text evidence="1">Belongs to the PlsX family.</text>
</comment>
<organism>
    <name type="scientific">Carboxydothermus hydrogenoformans (strain ATCC BAA-161 / DSM 6008 / Z-2901)</name>
    <dbReference type="NCBI Taxonomy" id="246194"/>
    <lineage>
        <taxon>Bacteria</taxon>
        <taxon>Bacillati</taxon>
        <taxon>Bacillota</taxon>
        <taxon>Clostridia</taxon>
        <taxon>Thermoanaerobacterales</taxon>
        <taxon>Thermoanaerobacteraceae</taxon>
        <taxon>Carboxydothermus</taxon>
    </lineage>
</organism>
<dbReference type="EC" id="2.3.1.274" evidence="1"/>
<dbReference type="EMBL" id="CP000141">
    <property type="protein sequence ID" value="ABB15261.1"/>
    <property type="molecule type" value="Genomic_DNA"/>
</dbReference>
<dbReference type="SMR" id="Q3AC51"/>
<dbReference type="FunCoup" id="Q3AC51">
    <property type="interactions" value="302"/>
</dbReference>
<dbReference type="STRING" id="246194.CHY_1451"/>
<dbReference type="KEGG" id="chy:CHY_1451"/>
<dbReference type="eggNOG" id="COG0416">
    <property type="taxonomic scope" value="Bacteria"/>
</dbReference>
<dbReference type="HOGENOM" id="CLU_039379_1_1_9"/>
<dbReference type="InParanoid" id="Q3AC51"/>
<dbReference type="OrthoDB" id="9806408at2"/>
<dbReference type="UniPathway" id="UPA00085"/>
<dbReference type="Proteomes" id="UP000002706">
    <property type="component" value="Chromosome"/>
</dbReference>
<dbReference type="GO" id="GO:0005737">
    <property type="term" value="C:cytoplasm"/>
    <property type="evidence" value="ECO:0007669"/>
    <property type="project" value="UniProtKB-SubCell"/>
</dbReference>
<dbReference type="GO" id="GO:0043811">
    <property type="term" value="F:phosphate:acyl-[acyl carrier protein] acyltransferase activity"/>
    <property type="evidence" value="ECO:0007669"/>
    <property type="project" value="UniProtKB-UniRule"/>
</dbReference>
<dbReference type="GO" id="GO:0006633">
    <property type="term" value="P:fatty acid biosynthetic process"/>
    <property type="evidence" value="ECO:0007669"/>
    <property type="project" value="UniProtKB-UniRule"/>
</dbReference>
<dbReference type="GO" id="GO:0008654">
    <property type="term" value="P:phospholipid biosynthetic process"/>
    <property type="evidence" value="ECO:0007669"/>
    <property type="project" value="UniProtKB-KW"/>
</dbReference>
<dbReference type="Gene3D" id="3.40.718.10">
    <property type="entry name" value="Isopropylmalate Dehydrogenase"/>
    <property type="match status" value="1"/>
</dbReference>
<dbReference type="HAMAP" id="MF_00019">
    <property type="entry name" value="PlsX"/>
    <property type="match status" value="1"/>
</dbReference>
<dbReference type="InterPro" id="IPR003664">
    <property type="entry name" value="FA_synthesis"/>
</dbReference>
<dbReference type="InterPro" id="IPR012281">
    <property type="entry name" value="Phospholipid_synth_PlsX-like"/>
</dbReference>
<dbReference type="NCBIfam" id="TIGR00182">
    <property type="entry name" value="plsX"/>
    <property type="match status" value="1"/>
</dbReference>
<dbReference type="PANTHER" id="PTHR30100">
    <property type="entry name" value="FATTY ACID/PHOSPHOLIPID SYNTHESIS PROTEIN PLSX"/>
    <property type="match status" value="1"/>
</dbReference>
<dbReference type="PANTHER" id="PTHR30100:SF1">
    <property type="entry name" value="PHOSPHATE ACYLTRANSFERASE"/>
    <property type="match status" value="1"/>
</dbReference>
<dbReference type="Pfam" id="PF02504">
    <property type="entry name" value="FA_synthesis"/>
    <property type="match status" value="1"/>
</dbReference>
<dbReference type="PIRSF" id="PIRSF002465">
    <property type="entry name" value="Phsphlp_syn_PlsX"/>
    <property type="match status" value="1"/>
</dbReference>
<dbReference type="SUPFAM" id="SSF53659">
    <property type="entry name" value="Isocitrate/Isopropylmalate dehydrogenase-like"/>
    <property type="match status" value="1"/>
</dbReference>
<protein>
    <recommendedName>
        <fullName evidence="1">Phosphate acyltransferase</fullName>
        <ecNumber evidence="1">2.3.1.274</ecNumber>
    </recommendedName>
    <alternativeName>
        <fullName evidence="1">Acyl-ACP phosphotransacylase</fullName>
    </alternativeName>
    <alternativeName>
        <fullName evidence="1">Acyl-[acyl-carrier-protein]--phosphate acyltransferase</fullName>
    </alternativeName>
    <alternativeName>
        <fullName evidence="1">Phosphate-acyl-ACP acyltransferase</fullName>
    </alternativeName>
</protein>
<name>PLSX_CARHZ</name>
<accession>Q3AC51</accession>
<evidence type="ECO:0000255" key="1">
    <source>
        <dbReference type="HAMAP-Rule" id="MF_00019"/>
    </source>
</evidence>
<proteinExistence type="inferred from homology"/>
<sequence length="330" mass="35774">MLVVDAMGGDYAPREIVLGVQDFVEETGEKIVLVGRENEIKKELTKKGKSLGYIEIINADEVVTMEEKPTVAIKKKESSVWKGLQLVREGVAQGFFSAGNTGAVMASAVLCLGKINGIDRPAIITPLPTLTGQTFLIDAGANVDVKPENLFQFAVMAQVYLKTAYQIKNPRVALLSNGEEEGKGNDLIKKTFPILKEKISGFIGNIEGKDIFRGVADIIVADGFVGNIVLKTGEGLAESIFVLLKNEVFTGLRGSLGGFILRESLQKIKKRLDYAEYGGAPLLGVNGIVFIAHGRSRRLAVRNGLKVMTKTVESGFLAELIKGDFNVWKD</sequence>
<gene>
    <name evidence="1" type="primary">plsX</name>
    <name type="ordered locus">CHY_1451</name>
</gene>
<reference key="1">
    <citation type="journal article" date="2005" name="PLoS Genet.">
        <title>Life in hot carbon monoxide: the complete genome sequence of Carboxydothermus hydrogenoformans Z-2901.</title>
        <authorList>
            <person name="Wu M."/>
            <person name="Ren Q."/>
            <person name="Durkin A.S."/>
            <person name="Daugherty S.C."/>
            <person name="Brinkac L.M."/>
            <person name="Dodson R.J."/>
            <person name="Madupu R."/>
            <person name="Sullivan S.A."/>
            <person name="Kolonay J.F."/>
            <person name="Nelson W.C."/>
            <person name="Tallon L.J."/>
            <person name="Jones K.M."/>
            <person name="Ulrich L.E."/>
            <person name="Gonzalez J.M."/>
            <person name="Zhulin I.B."/>
            <person name="Robb F.T."/>
            <person name="Eisen J.A."/>
        </authorList>
    </citation>
    <scope>NUCLEOTIDE SEQUENCE [LARGE SCALE GENOMIC DNA]</scope>
    <source>
        <strain>ATCC BAA-161 / DSM 6008 / Z-2901</strain>
    </source>
</reference>